<organism>
    <name type="scientific">Bos taurus</name>
    <name type="common">Bovine</name>
    <dbReference type="NCBI Taxonomy" id="9913"/>
    <lineage>
        <taxon>Eukaryota</taxon>
        <taxon>Metazoa</taxon>
        <taxon>Chordata</taxon>
        <taxon>Craniata</taxon>
        <taxon>Vertebrata</taxon>
        <taxon>Euteleostomi</taxon>
        <taxon>Mammalia</taxon>
        <taxon>Eutheria</taxon>
        <taxon>Laurasiatheria</taxon>
        <taxon>Artiodactyla</taxon>
        <taxon>Ruminantia</taxon>
        <taxon>Pecora</taxon>
        <taxon>Bovidae</taxon>
        <taxon>Bovinae</taxon>
        <taxon>Bos</taxon>
    </lineage>
</organism>
<accession>P81282</accession>
<accession>O77609</accession>
<accession>O77610</accession>
<accession>O77611</accession>
<accession>O77612</accession>
<evidence type="ECO:0000250" key="1"/>
<evidence type="ECO:0000250" key="2">
    <source>
        <dbReference type="UniProtKB" id="P13611"/>
    </source>
</evidence>
<evidence type="ECO:0000250" key="3">
    <source>
        <dbReference type="UniProtKB" id="Q62059"/>
    </source>
</evidence>
<evidence type="ECO:0000255" key="4"/>
<evidence type="ECO:0000255" key="5">
    <source>
        <dbReference type="PROSITE-ProRule" id="PRU00040"/>
    </source>
</evidence>
<evidence type="ECO:0000255" key="6">
    <source>
        <dbReference type="PROSITE-ProRule" id="PRU00076"/>
    </source>
</evidence>
<evidence type="ECO:0000255" key="7">
    <source>
        <dbReference type="PROSITE-ProRule" id="PRU00302"/>
    </source>
</evidence>
<evidence type="ECO:0000255" key="8">
    <source>
        <dbReference type="PROSITE-ProRule" id="PRU00323"/>
    </source>
</evidence>
<evidence type="ECO:0000256" key="9">
    <source>
        <dbReference type="SAM" id="MobiDB-lite"/>
    </source>
</evidence>
<evidence type="ECO:0000303" key="10">
    <source>
    </source>
</evidence>
<evidence type="ECO:0000305" key="11"/>
<protein>
    <recommendedName>
        <fullName>Versican core protein</fullName>
    </recommendedName>
    <alternativeName>
        <fullName>Chondroitin sulfate proteoglycan core protein 2</fullName>
        <shortName>Chondroitin sulfate proteoglycan 2</shortName>
    </alternativeName>
    <alternativeName>
        <fullName>Glial hyaluronate-binding protein</fullName>
        <shortName>GHAP</shortName>
    </alternativeName>
    <alternativeName>
        <fullName>Large fibroblast proteoglycan</fullName>
    </alternativeName>
    <alternativeName>
        <fullName>PG-M</fullName>
    </alternativeName>
</protein>
<reference key="1">
    <citation type="journal article" date="1998" name="J. Biol. Chem.">
        <title>Versican V2 is a major extracellular matrix component of the mature bovine brain.</title>
        <authorList>
            <person name="Schmalfeldt M."/>
            <person name="Dours-Zimmermann M.T."/>
            <person name="Winterhalter K.H."/>
            <person name="Zimmermann D.R."/>
        </authorList>
    </citation>
    <scope>NUCLEOTIDE SEQUENCE [MRNA] (ISOFORMS V0; V1; V2 AND V3)</scope>
    <source>
        <tissue>Forebrain</tissue>
    </source>
</reference>
<reference key="2">
    <citation type="journal article" date="1991" name="Biochim. Biophys. Acta">
        <title>Interaction of a brain extracellular matrix protein with hyaluronic acid.</title>
        <authorList>
            <person name="Perides G."/>
            <person name="Biviano F."/>
            <person name="Bignami A."/>
        </authorList>
    </citation>
    <scope>PROTEIN SEQUENCE OF 21-53; 78-96; 226-250; 262-277; 295-306; 314-324; 329-331 AND 342-348</scope>
    <source>
        <tissue>Spinal cord</tissue>
    </source>
</reference>
<gene>
    <name type="primary">VCAN</name>
    <name type="synonym">CSPG2</name>
</gene>
<name>CSPG2_BOVIN</name>
<comment type="function">
    <text>May play a role in intercellular signaling and in connecting cells with the extracellular matrix. May take part in the regulation of cell motility, growth and differentiation. Binds hyaluronic acid.</text>
</comment>
<comment type="subunit">
    <text evidence="1">Interacts with FBLN1.</text>
</comment>
<comment type="subcellular location">
    <subcellularLocation>
        <location evidence="2">Secreted</location>
        <location evidence="2">Extracellular space</location>
        <location evidence="2">Extracellular matrix</location>
    </subcellularLocation>
    <subcellularLocation>
        <location evidence="2">Cell projection</location>
        <location evidence="2">Cilium</location>
        <location evidence="2">Photoreceptor outer segment</location>
    </subcellularLocation>
    <subcellularLocation>
        <location evidence="2">Secreted</location>
        <location evidence="2">Extracellular space</location>
        <location evidence="2">Extracellular matrix</location>
        <location evidence="2">Interphotoreceptor matrix</location>
    </subcellularLocation>
    <subcellularLocation>
        <location evidence="2">Secreted</location>
    </subcellularLocation>
</comment>
<comment type="alternative products">
    <event type="alternative splicing"/>
    <isoform>
        <id>P81282-1</id>
        <name>V0</name>
        <sequence type="displayed"/>
    </isoform>
    <isoform>
        <id>P81282-2</id>
        <name>V1</name>
        <sequence type="described" ref="VSP_003078 VSP_003079"/>
    </isoform>
    <isoform>
        <id>P81282-3</id>
        <name>V2</name>
        <sequence type="described" ref="VSP_003080"/>
    </isoform>
    <isoform>
        <id>P81282-4</id>
        <name>V3</name>
        <sequence type="described" ref="VSP_003078 VSP_003081"/>
    </isoform>
    <text>Additional isoforms seem to exist.</text>
</comment>
<comment type="tissue specificity">
    <text>Cerebral white matter. Isoform V0 and isoform V1 are expressed in the central nervous system, and in a number of mesenchymal and epithelial tissues; the major isoform V2 is restricted to the central nervous system.</text>
</comment>
<comment type="developmental stage">
    <text>Disappears after the cartilage development.</text>
</comment>
<comment type="PTM">
    <text evidence="2">Phosphorylated by FAM20C in the extracellular medium.</text>
</comment>
<comment type="PTM">
    <text evidence="3">Proteolytically cleaved by ADAMTS5 and ADAMTS15 in the pericellular matrix surrounding myoblasts, facilitating myoblast contact and fusion which is required for skeletal muscle development and regeneration.</text>
</comment>
<comment type="similarity">
    <text evidence="11">Belongs to the aggrecan/versican proteoglycan family.</text>
</comment>
<feature type="signal peptide" evidence="4">
    <location>
        <begin position="1"/>
        <end position="20"/>
    </location>
</feature>
<feature type="chain" id="PRO_0000017521" description="Versican core protein">
    <location>
        <begin position="21"/>
        <end position="3381"/>
    </location>
</feature>
<feature type="domain" description="Ig-like V-type">
    <location>
        <begin position="21"/>
        <end position="147"/>
    </location>
</feature>
<feature type="domain" description="Link 1" evidence="8">
    <location>
        <begin position="151"/>
        <end position="246"/>
    </location>
</feature>
<feature type="domain" description="Link 2" evidence="8">
    <location>
        <begin position="252"/>
        <end position="348"/>
    </location>
</feature>
<feature type="domain" description="EGF-like 1" evidence="6">
    <location>
        <begin position="3074"/>
        <end position="3110"/>
    </location>
</feature>
<feature type="domain" description="EGF-like 2; calcium-binding" evidence="6">
    <location>
        <begin position="3112"/>
        <end position="3148"/>
    </location>
</feature>
<feature type="domain" description="C-type lectin" evidence="5">
    <location>
        <begin position="3161"/>
        <end position="3275"/>
    </location>
</feature>
<feature type="domain" description="Sushi" evidence="7">
    <location>
        <begin position="3279"/>
        <end position="3339"/>
    </location>
</feature>
<feature type="region of interest" description="GAG-alpha (glucosaminoglycan attachment domain)">
    <location>
        <begin position="349"/>
        <end position="1336"/>
    </location>
</feature>
<feature type="region of interest" description="Disordered" evidence="9">
    <location>
        <begin position="417"/>
        <end position="437"/>
    </location>
</feature>
<feature type="region of interest" description="Disordered" evidence="9">
    <location>
        <begin position="603"/>
        <end position="623"/>
    </location>
</feature>
<feature type="region of interest" description="Disordered" evidence="9">
    <location>
        <begin position="816"/>
        <end position="866"/>
    </location>
</feature>
<feature type="region of interest" description="Disordered" evidence="9">
    <location>
        <begin position="1043"/>
        <end position="1081"/>
    </location>
</feature>
<feature type="region of interest" description="Disordered" evidence="9">
    <location>
        <begin position="1218"/>
        <end position="1244"/>
    </location>
</feature>
<feature type="region of interest" description="GAG-beta">
    <location>
        <begin position="1337"/>
        <end position="3074"/>
    </location>
</feature>
<feature type="region of interest" description="Disordered" evidence="9">
    <location>
        <begin position="1338"/>
        <end position="1362"/>
    </location>
</feature>
<feature type="region of interest" description="Disordered" evidence="9">
    <location>
        <begin position="1417"/>
        <end position="1446"/>
    </location>
</feature>
<feature type="region of interest" description="Disordered" evidence="9">
    <location>
        <begin position="1455"/>
        <end position="1474"/>
    </location>
</feature>
<feature type="region of interest" description="Disordered" evidence="9">
    <location>
        <begin position="1484"/>
        <end position="1512"/>
    </location>
</feature>
<feature type="region of interest" description="Disordered" evidence="9">
    <location>
        <begin position="1708"/>
        <end position="1785"/>
    </location>
</feature>
<feature type="region of interest" description="Disordered" evidence="9">
    <location>
        <begin position="1964"/>
        <end position="1986"/>
    </location>
</feature>
<feature type="region of interest" description="Disordered" evidence="9">
    <location>
        <begin position="2041"/>
        <end position="2126"/>
    </location>
</feature>
<feature type="region of interest" description="Disordered" evidence="9">
    <location>
        <begin position="2338"/>
        <end position="2388"/>
    </location>
</feature>
<feature type="region of interest" description="Disordered" evidence="9">
    <location>
        <begin position="2490"/>
        <end position="2512"/>
    </location>
</feature>
<feature type="region of interest" description="Disordered" evidence="9">
    <location>
        <begin position="2594"/>
        <end position="2615"/>
    </location>
</feature>
<feature type="region of interest" description="Disordered" evidence="9">
    <location>
        <begin position="2819"/>
        <end position="2893"/>
    </location>
</feature>
<feature type="region of interest" description="Disordered" evidence="9">
    <location>
        <begin position="3355"/>
        <end position="3381"/>
    </location>
</feature>
<feature type="compositionally biased region" description="Polar residues" evidence="9">
    <location>
        <begin position="417"/>
        <end position="427"/>
    </location>
</feature>
<feature type="compositionally biased region" description="Basic and acidic residues" evidence="9">
    <location>
        <begin position="846"/>
        <end position="863"/>
    </location>
</feature>
<feature type="compositionally biased region" description="Basic and acidic residues" evidence="9">
    <location>
        <begin position="1043"/>
        <end position="1052"/>
    </location>
</feature>
<feature type="compositionally biased region" description="Acidic residues" evidence="9">
    <location>
        <begin position="1352"/>
        <end position="1362"/>
    </location>
</feature>
<feature type="compositionally biased region" description="Basic and acidic residues" evidence="9">
    <location>
        <begin position="1417"/>
        <end position="1428"/>
    </location>
</feature>
<feature type="compositionally biased region" description="Basic and acidic residues" evidence="9">
    <location>
        <begin position="1712"/>
        <end position="1721"/>
    </location>
</feature>
<feature type="compositionally biased region" description="Polar residues" evidence="9">
    <location>
        <begin position="1726"/>
        <end position="1738"/>
    </location>
</feature>
<feature type="compositionally biased region" description="Low complexity" evidence="9">
    <location>
        <begin position="1743"/>
        <end position="1761"/>
    </location>
</feature>
<feature type="compositionally biased region" description="Polar residues" evidence="9">
    <location>
        <begin position="1764"/>
        <end position="1784"/>
    </location>
</feature>
<feature type="compositionally biased region" description="Polar residues" evidence="9">
    <location>
        <begin position="1964"/>
        <end position="1976"/>
    </location>
</feature>
<feature type="compositionally biased region" description="Basic and acidic residues" evidence="9">
    <location>
        <begin position="2065"/>
        <end position="2075"/>
    </location>
</feature>
<feature type="compositionally biased region" description="Polar residues" evidence="9">
    <location>
        <begin position="2345"/>
        <end position="2357"/>
    </location>
</feature>
<feature type="compositionally biased region" description="Polar residues" evidence="9">
    <location>
        <begin position="2367"/>
        <end position="2383"/>
    </location>
</feature>
<feature type="compositionally biased region" description="Polar residues" evidence="9">
    <location>
        <begin position="2840"/>
        <end position="2851"/>
    </location>
</feature>
<feature type="compositionally biased region" description="Polar residues" evidence="9">
    <location>
        <begin position="3355"/>
        <end position="3365"/>
    </location>
</feature>
<feature type="site" description="Cleavage; by ADAMTS15" evidence="3">
    <location>
        <begin position="1423"/>
        <end position="1424"/>
    </location>
</feature>
<feature type="modified residue" description="Phosphoserine" evidence="2">
    <location>
        <position position="2109"/>
    </location>
</feature>
<feature type="modified residue" description="Phosphoserine" evidence="3">
    <location>
        <position position="2607"/>
    </location>
</feature>
<feature type="modified residue" description="Phosphoserine" evidence="3">
    <location>
        <position position="2608"/>
    </location>
</feature>
<feature type="modified residue" description="Phosphothreonine" evidence="2">
    <location>
        <position position="2612"/>
    </location>
</feature>
<feature type="glycosylation site" description="N-linked (GlcNAc...) asparagine" evidence="4">
    <location>
        <position position="57"/>
    </location>
</feature>
<feature type="glycosylation site" description="N-linked (GlcNAc...) asparagine" evidence="4">
    <location>
        <position position="331"/>
    </location>
</feature>
<feature type="glycosylation site" description="N-linked (GlcNAc...) asparagine" evidence="4">
    <location>
        <position position="352"/>
    </location>
</feature>
<feature type="glycosylation site" description="O-linked (Xyl...) (chondroitin sulfate) serine" evidence="2">
    <location>
        <position position="660"/>
    </location>
</feature>
<feature type="glycosylation site" description="N-linked (GlcNAc...) asparagine" evidence="4">
    <location>
        <position position="817"/>
    </location>
</feature>
<feature type="glycosylation site" description="N-linked (GlcNAc...) asparagine" evidence="4">
    <location>
        <position position="965"/>
    </location>
</feature>
<feature type="glycosylation site" description="N-linked (GlcNAc...) asparagine" evidence="4">
    <location>
        <position position="1017"/>
    </location>
</feature>
<feature type="glycosylation site" description="N-linked (GlcNAc...) asparagine" evidence="4">
    <location>
        <position position="1333"/>
    </location>
</feature>
<feature type="glycosylation site" description="N-linked (GlcNAc...) asparagine" evidence="4">
    <location>
        <position position="1393"/>
    </location>
</feature>
<feature type="glycosylation site" description="N-linked (GlcNAc...) asparagine" evidence="4">
    <location>
        <position position="1437"/>
    </location>
</feature>
<feature type="glycosylation site" description="N-linked (GlcNAc...) asparagine" evidence="4">
    <location>
        <position position="1463"/>
    </location>
</feature>
<feature type="glycosylation site" description="O-linked (Xyl...) (chondroitin sulfate) serine" evidence="2">
    <location>
        <position position="1539"/>
    </location>
</feature>
<feature type="glycosylation site" description="O-linked (Xyl...) (chondroitin sulfate) serine" evidence="2">
    <location>
        <position position="1621"/>
    </location>
</feature>
<feature type="glycosylation site" description="N-linked (GlcNAc...) asparagine" evidence="4">
    <location>
        <position position="1653"/>
    </location>
</feature>
<feature type="glycosylation site" description="O-linked (Xyl...) (chondroitin sulfate) serine" evidence="2">
    <location>
        <position position="1928"/>
    </location>
</feature>
<feature type="glycosylation site" description="O-linked (Xyl...) (chondroitin sulfate) serine" evidence="2">
    <location>
        <position position="1952"/>
    </location>
</feature>
<feature type="glycosylation site" description="N-linked (GlcNAc...) asparagine" evidence="4">
    <location>
        <position position="1974"/>
    </location>
</feature>
<feature type="glycosylation site" description="N-linked (GlcNAc...) asparagine" evidence="4">
    <location>
        <position position="2045"/>
    </location>
</feature>
<feature type="glycosylation site" description="N-linked (GlcNAc...) asparagine" evidence="4">
    <location>
        <position position="2074"/>
    </location>
</feature>
<feature type="glycosylation site" description="N-linked (GlcNAc...) asparagine" evidence="4">
    <location>
        <position position="2103"/>
    </location>
</feature>
<feature type="glycosylation site" description="O-linked (Xyl...) (chondroitin sulfate) serine" evidence="2">
    <location>
        <position position="2240"/>
    </location>
</feature>
<feature type="glycosylation site" description="O-linked (Xyl...) (chondroitin sulfate) serine" evidence="2">
    <location>
        <position position="2247"/>
    </location>
</feature>
<feature type="glycosylation site" description="N-linked (GlcNAc...) asparagine" evidence="4">
    <location>
        <position position="2263"/>
    </location>
</feature>
<feature type="glycosylation site" description="N-linked (GlcNAc...) asparagine" evidence="4">
    <location>
        <position position="2290"/>
    </location>
</feature>
<feature type="glycosylation site" description="N-linked (GlcNAc...) asparagine" evidence="4">
    <location>
        <position position="2356"/>
    </location>
</feature>
<feature type="glycosylation site" description="N-linked (GlcNAc...) asparagine" evidence="4">
    <location>
        <position position="2623"/>
    </location>
</feature>
<feature type="glycosylation site" description="N-linked (GlcNAc...) asparagine" evidence="4">
    <location>
        <position position="2641"/>
    </location>
</feature>
<feature type="glycosylation site" description="O-linked (Xyl...) (chondroitin sulfate) serine" evidence="4">
    <location>
        <position position="2714"/>
    </location>
</feature>
<feature type="glycosylation site" description="O-linked (Xyl...) (chondroitin sulfate) serine" evidence="4">
    <location>
        <position position="2715"/>
    </location>
</feature>
<feature type="glycosylation site" description="O-linked (Xyl...) (chondroitin sulfate) serine" evidence="2">
    <location>
        <position position="2759"/>
    </location>
</feature>
<feature type="glycosylation site" description="N-linked (GlcNAc...) asparagine" evidence="4">
    <location>
        <position position="2919"/>
    </location>
</feature>
<feature type="glycosylation site" description="N-linked (GlcNAc...) asparagine" evidence="4">
    <location>
        <position position="3052"/>
    </location>
</feature>
<feature type="glycosylation site" description="N-linked (GlcNAc...) asparagine" evidence="4">
    <location>
        <position position="3354"/>
    </location>
</feature>
<feature type="glycosylation site" description="N-linked (GlcNAc...) asparagine" evidence="4">
    <location>
        <position position="3364"/>
    </location>
</feature>
<feature type="disulfide bond" evidence="1">
    <location>
        <begin position="44"/>
        <end position="131"/>
    </location>
</feature>
<feature type="disulfide bond" evidence="1">
    <location>
        <begin position="173"/>
        <end position="244"/>
    </location>
</feature>
<feature type="disulfide bond" evidence="1">
    <location>
        <begin position="197"/>
        <end position="218"/>
    </location>
</feature>
<feature type="disulfide bond" evidence="1">
    <location>
        <begin position="271"/>
        <end position="346"/>
    </location>
</feature>
<feature type="disulfide bond" evidence="1">
    <location>
        <begin position="295"/>
        <end position="316"/>
    </location>
</feature>
<feature type="disulfide bond" evidence="1">
    <location>
        <begin position="3078"/>
        <end position="3089"/>
    </location>
</feature>
<feature type="disulfide bond" evidence="1">
    <location>
        <begin position="3083"/>
        <end position="3098"/>
    </location>
</feature>
<feature type="disulfide bond" evidence="1">
    <location>
        <begin position="3100"/>
        <end position="3109"/>
    </location>
</feature>
<feature type="disulfide bond" evidence="1">
    <location>
        <begin position="3116"/>
        <end position="3127"/>
    </location>
</feature>
<feature type="disulfide bond" evidence="1">
    <location>
        <begin position="3121"/>
        <end position="3136"/>
    </location>
</feature>
<feature type="disulfide bond" evidence="1">
    <location>
        <begin position="3138"/>
        <end position="3147"/>
    </location>
</feature>
<feature type="disulfide bond" evidence="1">
    <location>
        <begin position="3154"/>
        <end position="3165"/>
    </location>
</feature>
<feature type="disulfide bond" evidence="1">
    <location>
        <begin position="3182"/>
        <end position="3274"/>
    </location>
</feature>
<feature type="disulfide bond" evidence="1">
    <location>
        <begin position="3250"/>
        <end position="3266"/>
    </location>
</feature>
<feature type="disulfide bond" evidence="1">
    <location>
        <begin position="3281"/>
        <end position="3324"/>
    </location>
</feature>
<feature type="disulfide bond" evidence="1">
    <location>
        <begin position="3310"/>
        <end position="3337"/>
    </location>
</feature>
<feature type="splice variant" id="VSP_003078" description="In isoform V1 and isoform V3." evidence="10">
    <original>P</original>
    <variation>R</variation>
    <location>
        <position position="349"/>
    </location>
</feature>
<feature type="splice variant" id="VSP_003081" description="In isoform V3." evidence="10">
    <location>
        <begin position="350"/>
        <end position="3074"/>
    </location>
</feature>
<feature type="splice variant" id="VSP_003079" description="In isoform V1." evidence="10">
    <location>
        <begin position="350"/>
        <end position="1336"/>
    </location>
</feature>
<feature type="splice variant" id="VSP_003080" description="In isoform V2." evidence="10">
    <location>
        <begin position="1337"/>
        <end position="3074"/>
    </location>
</feature>
<feature type="sequence conflict" description="In Ref. 2; AA sequence." evidence="11" ref="2">
    <location>
        <position position="25"/>
    </location>
</feature>
<feature type="sequence conflict" description="In Ref. 2; AA sequence." evidence="11" ref="2">
    <location>
        <position position="51"/>
    </location>
</feature>
<feature type="sequence conflict" description="In Ref. 2; AA sequence." evidence="11" ref="2">
    <original>N</original>
    <variation>D</variation>
    <location>
        <position position="89"/>
    </location>
</feature>
<feature type="sequence conflict" description="In Ref. 2; AA sequence." evidence="11" ref="2">
    <original>Q</original>
    <variation>D</variation>
    <location>
        <position position="96"/>
    </location>
</feature>
<feature type="sequence conflict" description="In Ref. 2; AA sequence." evidence="11" ref="2">
    <original>C</original>
    <variation>R</variation>
    <location>
        <position position="346"/>
    </location>
</feature>
<dbReference type="EMBL" id="AF060456">
    <property type="protein sequence ID" value="AAC24358.1"/>
    <property type="molecule type" value="mRNA"/>
</dbReference>
<dbReference type="EMBL" id="AF060457">
    <property type="protein sequence ID" value="AAC24359.1"/>
    <property type="molecule type" value="mRNA"/>
</dbReference>
<dbReference type="EMBL" id="AF060458">
    <property type="protein sequence ID" value="AAC24360.1"/>
    <property type="molecule type" value="mRNA"/>
</dbReference>
<dbReference type="EMBL" id="AF060459">
    <property type="protein sequence ID" value="AAC24361.1"/>
    <property type="molecule type" value="mRNA"/>
</dbReference>
<dbReference type="PIR" id="T14274">
    <property type="entry name" value="T14274"/>
</dbReference>
<dbReference type="PIR" id="T42389">
    <property type="entry name" value="T42389"/>
</dbReference>
<dbReference type="RefSeq" id="NP_851378.1">
    <molecule id="P81282-1"/>
    <property type="nucleotide sequence ID" value="NM_181035.2"/>
</dbReference>
<dbReference type="RefSeq" id="XP_015327844.2">
    <molecule id="P81282-4"/>
    <property type="nucleotide sequence ID" value="XM_015472358.3"/>
</dbReference>
<dbReference type="SMR" id="P81282"/>
<dbReference type="FunCoup" id="P81282">
    <property type="interactions" value="217"/>
</dbReference>
<dbReference type="STRING" id="9913.ENSBTAP00000067301"/>
<dbReference type="GlyCosmos" id="P81282">
    <property type="glycosylation" value="24 sites, No reported glycans"/>
</dbReference>
<dbReference type="GlyGen" id="P81282">
    <property type="glycosylation" value="34 sites"/>
</dbReference>
<dbReference type="PaxDb" id="9913-ENSBTAP00000019848"/>
<dbReference type="PeptideAtlas" id="P81282"/>
<dbReference type="Ensembl" id="ENSBTAT00000042717.5">
    <molecule id="P81282-4"/>
    <property type="protein sequence ID" value="ENSBTAP00000040348.4"/>
    <property type="gene ID" value="ENSBTAG00000014906.7"/>
</dbReference>
<dbReference type="GeneID" id="282662"/>
<dbReference type="KEGG" id="bta:282662"/>
<dbReference type="CTD" id="1462"/>
<dbReference type="VEuPathDB" id="HostDB:ENSBTAG00000014906"/>
<dbReference type="eggNOG" id="ENOG502QRBE">
    <property type="taxonomic scope" value="Eukaryota"/>
</dbReference>
<dbReference type="GeneTree" id="ENSGT00940000156102"/>
<dbReference type="InParanoid" id="P81282"/>
<dbReference type="OrthoDB" id="9905227at2759"/>
<dbReference type="Reactome" id="R-BTA-1971475">
    <property type="pathway name" value="A tetrasaccharide linker sequence is required for GAG synthesis"/>
</dbReference>
<dbReference type="Reactome" id="R-BTA-2022870">
    <property type="pathway name" value="Chondroitin sulfate biosynthesis"/>
</dbReference>
<dbReference type="Reactome" id="R-BTA-2022923">
    <property type="pathway name" value="Dermatan sulfate biosynthesis"/>
</dbReference>
<dbReference type="Reactome" id="R-BTA-2024101">
    <property type="pathway name" value="CS/DS degradation"/>
</dbReference>
<dbReference type="Reactome" id="R-BTA-3000178">
    <property type="pathway name" value="ECM proteoglycans"/>
</dbReference>
<dbReference type="Reactome" id="R-BTA-381426">
    <property type="pathway name" value="Regulation of Insulin-like Growth Factor (IGF) transport and uptake by Insulin-like Growth Factor Binding Proteins (IGFBPs)"/>
</dbReference>
<dbReference type="Reactome" id="R-BTA-8957275">
    <property type="pathway name" value="Post-translational protein phosphorylation"/>
</dbReference>
<dbReference type="Proteomes" id="UP000009136">
    <property type="component" value="Chromosome 7"/>
</dbReference>
<dbReference type="Bgee" id="ENSBTAG00000014906">
    <property type="expression patterns" value="Expressed in granulosa cell and 104 other cell types or tissues"/>
</dbReference>
<dbReference type="GO" id="GO:0005576">
    <property type="term" value="C:extracellular region"/>
    <property type="evidence" value="ECO:0000250"/>
    <property type="project" value="UniProtKB"/>
</dbReference>
<dbReference type="GO" id="GO:0005615">
    <property type="term" value="C:extracellular space"/>
    <property type="evidence" value="ECO:0000318"/>
    <property type="project" value="GO_Central"/>
</dbReference>
<dbReference type="GO" id="GO:0033165">
    <property type="term" value="C:interphotoreceptor matrix"/>
    <property type="evidence" value="ECO:0007669"/>
    <property type="project" value="UniProtKB-SubCell"/>
</dbReference>
<dbReference type="GO" id="GO:0072534">
    <property type="term" value="C:perineuronal net"/>
    <property type="evidence" value="ECO:0000318"/>
    <property type="project" value="GO_Central"/>
</dbReference>
<dbReference type="GO" id="GO:0001750">
    <property type="term" value="C:photoreceptor outer segment"/>
    <property type="evidence" value="ECO:0007669"/>
    <property type="project" value="UniProtKB-SubCell"/>
</dbReference>
<dbReference type="GO" id="GO:0045202">
    <property type="term" value="C:synapse"/>
    <property type="evidence" value="ECO:0000318"/>
    <property type="project" value="GO_Central"/>
</dbReference>
<dbReference type="GO" id="GO:0005509">
    <property type="term" value="F:calcium ion binding"/>
    <property type="evidence" value="ECO:0007669"/>
    <property type="project" value="InterPro"/>
</dbReference>
<dbReference type="GO" id="GO:0030246">
    <property type="term" value="F:carbohydrate binding"/>
    <property type="evidence" value="ECO:0007669"/>
    <property type="project" value="UniProtKB-KW"/>
</dbReference>
<dbReference type="GO" id="GO:0005540">
    <property type="term" value="F:hyaluronic acid binding"/>
    <property type="evidence" value="ECO:0007669"/>
    <property type="project" value="UniProtKB-KW"/>
</dbReference>
<dbReference type="GO" id="GO:0007155">
    <property type="term" value="P:cell adhesion"/>
    <property type="evidence" value="ECO:0007669"/>
    <property type="project" value="InterPro"/>
</dbReference>
<dbReference type="GO" id="GO:0007417">
    <property type="term" value="P:central nervous system development"/>
    <property type="evidence" value="ECO:0000318"/>
    <property type="project" value="GO_Central"/>
</dbReference>
<dbReference type="GO" id="GO:0001501">
    <property type="term" value="P:skeletal system development"/>
    <property type="evidence" value="ECO:0000318"/>
    <property type="project" value="GO_Central"/>
</dbReference>
<dbReference type="CDD" id="cd00033">
    <property type="entry name" value="CCP"/>
    <property type="match status" value="1"/>
</dbReference>
<dbReference type="CDD" id="cd03588">
    <property type="entry name" value="CLECT_CSPGs"/>
    <property type="match status" value="1"/>
</dbReference>
<dbReference type="CDD" id="cd00054">
    <property type="entry name" value="EGF_CA"/>
    <property type="match status" value="2"/>
</dbReference>
<dbReference type="CDD" id="cd05901">
    <property type="entry name" value="Ig_Versican"/>
    <property type="match status" value="1"/>
</dbReference>
<dbReference type="CDD" id="cd03517">
    <property type="entry name" value="Link_domain_CSPGs_modules_1_3"/>
    <property type="match status" value="1"/>
</dbReference>
<dbReference type="CDD" id="cd03520">
    <property type="entry name" value="Link_domain_CSPGs_modules_2_4"/>
    <property type="match status" value="1"/>
</dbReference>
<dbReference type="FunFam" id="3.10.100.10:FF:000011">
    <property type="entry name" value="Aggrecan core protein"/>
    <property type="match status" value="1"/>
</dbReference>
<dbReference type="FunFam" id="3.10.100.10:FF:000002">
    <property type="entry name" value="Hyaluronan proteoglycan link protein 1"/>
    <property type="match status" value="1"/>
</dbReference>
<dbReference type="FunFam" id="2.10.70.10:FF:000003">
    <property type="entry name" value="Versican core protein"/>
    <property type="match status" value="1"/>
</dbReference>
<dbReference type="FunFam" id="3.10.100.10:FF:000003">
    <property type="entry name" value="Versican core protein"/>
    <property type="match status" value="1"/>
</dbReference>
<dbReference type="FunFam" id="2.10.25.10:FF:000527">
    <property type="entry name" value="versican core protein isoform X2"/>
    <property type="match status" value="1"/>
</dbReference>
<dbReference type="FunFam" id="2.60.40.10:FF:000361">
    <property type="entry name" value="versican core protein-like"/>
    <property type="match status" value="1"/>
</dbReference>
<dbReference type="FunFam" id="2.10.25.10:FF:000006">
    <property type="entry name" value="Versican core protein-like isoform 1"/>
    <property type="match status" value="1"/>
</dbReference>
<dbReference type="Gene3D" id="2.10.70.10">
    <property type="entry name" value="Complement Module, domain 1"/>
    <property type="match status" value="1"/>
</dbReference>
<dbReference type="Gene3D" id="2.60.40.10">
    <property type="entry name" value="Immunoglobulins"/>
    <property type="match status" value="1"/>
</dbReference>
<dbReference type="Gene3D" id="2.10.25.10">
    <property type="entry name" value="Laminin"/>
    <property type="match status" value="2"/>
</dbReference>
<dbReference type="Gene3D" id="3.10.100.10">
    <property type="entry name" value="Mannose-Binding Protein A, subunit A"/>
    <property type="match status" value="3"/>
</dbReference>
<dbReference type="InterPro" id="IPR001304">
    <property type="entry name" value="C-type_lectin-like"/>
</dbReference>
<dbReference type="InterPro" id="IPR016186">
    <property type="entry name" value="C-type_lectin-like/link_sf"/>
</dbReference>
<dbReference type="InterPro" id="IPR018378">
    <property type="entry name" value="C-type_lectin_CS"/>
</dbReference>
<dbReference type="InterPro" id="IPR033987">
    <property type="entry name" value="CSPG_CTLD"/>
</dbReference>
<dbReference type="InterPro" id="IPR016187">
    <property type="entry name" value="CTDL_fold"/>
</dbReference>
<dbReference type="InterPro" id="IPR001881">
    <property type="entry name" value="EGF-like_Ca-bd_dom"/>
</dbReference>
<dbReference type="InterPro" id="IPR000742">
    <property type="entry name" value="EGF-like_dom"/>
</dbReference>
<dbReference type="InterPro" id="IPR000152">
    <property type="entry name" value="EGF-type_Asp/Asn_hydroxyl_site"/>
</dbReference>
<dbReference type="InterPro" id="IPR018097">
    <property type="entry name" value="EGF_Ca-bd_CS"/>
</dbReference>
<dbReference type="InterPro" id="IPR050691">
    <property type="entry name" value="Hyaluronan_bind_Proteoglycan"/>
</dbReference>
<dbReference type="InterPro" id="IPR007110">
    <property type="entry name" value="Ig-like_dom"/>
</dbReference>
<dbReference type="InterPro" id="IPR036179">
    <property type="entry name" value="Ig-like_dom_sf"/>
</dbReference>
<dbReference type="InterPro" id="IPR013783">
    <property type="entry name" value="Ig-like_fold"/>
</dbReference>
<dbReference type="InterPro" id="IPR003599">
    <property type="entry name" value="Ig_sub"/>
</dbReference>
<dbReference type="InterPro" id="IPR013106">
    <property type="entry name" value="Ig_V-set"/>
</dbReference>
<dbReference type="InterPro" id="IPR000538">
    <property type="entry name" value="Link_dom"/>
</dbReference>
<dbReference type="InterPro" id="IPR035976">
    <property type="entry name" value="Sushi/SCR/CCP_sf"/>
</dbReference>
<dbReference type="InterPro" id="IPR000436">
    <property type="entry name" value="Sushi_SCR_CCP_dom"/>
</dbReference>
<dbReference type="PANTHER" id="PTHR22804">
    <property type="entry name" value="AGGRECAN/VERSICAN PROTEOGLYCAN"/>
    <property type="match status" value="1"/>
</dbReference>
<dbReference type="PANTHER" id="PTHR22804:SF6">
    <property type="entry name" value="VERSICAN CORE PROTEIN"/>
    <property type="match status" value="1"/>
</dbReference>
<dbReference type="Pfam" id="PF00008">
    <property type="entry name" value="EGF"/>
    <property type="match status" value="2"/>
</dbReference>
<dbReference type="Pfam" id="PF00059">
    <property type="entry name" value="Lectin_C"/>
    <property type="match status" value="1"/>
</dbReference>
<dbReference type="Pfam" id="PF00084">
    <property type="entry name" value="Sushi"/>
    <property type="match status" value="1"/>
</dbReference>
<dbReference type="Pfam" id="PF07686">
    <property type="entry name" value="V-set"/>
    <property type="match status" value="1"/>
</dbReference>
<dbReference type="Pfam" id="PF00193">
    <property type="entry name" value="Xlink"/>
    <property type="match status" value="2"/>
</dbReference>
<dbReference type="PRINTS" id="PR01265">
    <property type="entry name" value="LINKMODULE"/>
</dbReference>
<dbReference type="SMART" id="SM00032">
    <property type="entry name" value="CCP"/>
    <property type="match status" value="1"/>
</dbReference>
<dbReference type="SMART" id="SM00034">
    <property type="entry name" value="CLECT"/>
    <property type="match status" value="1"/>
</dbReference>
<dbReference type="SMART" id="SM00181">
    <property type="entry name" value="EGF"/>
    <property type="match status" value="2"/>
</dbReference>
<dbReference type="SMART" id="SM00179">
    <property type="entry name" value="EGF_CA"/>
    <property type="match status" value="2"/>
</dbReference>
<dbReference type="SMART" id="SM00409">
    <property type="entry name" value="IG"/>
    <property type="match status" value="1"/>
</dbReference>
<dbReference type="SMART" id="SM00406">
    <property type="entry name" value="IGv"/>
    <property type="match status" value="1"/>
</dbReference>
<dbReference type="SMART" id="SM00445">
    <property type="entry name" value="LINK"/>
    <property type="match status" value="2"/>
</dbReference>
<dbReference type="SUPFAM" id="SSF56436">
    <property type="entry name" value="C-type lectin-like"/>
    <property type="match status" value="3"/>
</dbReference>
<dbReference type="SUPFAM" id="SSF57535">
    <property type="entry name" value="Complement control module/SCR domain"/>
    <property type="match status" value="1"/>
</dbReference>
<dbReference type="SUPFAM" id="SSF57196">
    <property type="entry name" value="EGF/Laminin"/>
    <property type="match status" value="1"/>
</dbReference>
<dbReference type="SUPFAM" id="SSF48726">
    <property type="entry name" value="Immunoglobulin"/>
    <property type="match status" value="1"/>
</dbReference>
<dbReference type="PROSITE" id="PS00010">
    <property type="entry name" value="ASX_HYDROXYL"/>
    <property type="match status" value="1"/>
</dbReference>
<dbReference type="PROSITE" id="PS00615">
    <property type="entry name" value="C_TYPE_LECTIN_1"/>
    <property type="match status" value="1"/>
</dbReference>
<dbReference type="PROSITE" id="PS50041">
    <property type="entry name" value="C_TYPE_LECTIN_2"/>
    <property type="match status" value="1"/>
</dbReference>
<dbReference type="PROSITE" id="PS00022">
    <property type="entry name" value="EGF_1"/>
    <property type="match status" value="2"/>
</dbReference>
<dbReference type="PROSITE" id="PS01186">
    <property type="entry name" value="EGF_2"/>
    <property type="match status" value="1"/>
</dbReference>
<dbReference type="PROSITE" id="PS50026">
    <property type="entry name" value="EGF_3"/>
    <property type="match status" value="2"/>
</dbReference>
<dbReference type="PROSITE" id="PS01187">
    <property type="entry name" value="EGF_CA"/>
    <property type="match status" value="1"/>
</dbReference>
<dbReference type="PROSITE" id="PS50835">
    <property type="entry name" value="IG_LIKE"/>
    <property type="match status" value="1"/>
</dbReference>
<dbReference type="PROSITE" id="PS01241">
    <property type="entry name" value="LINK_1"/>
    <property type="match status" value="2"/>
</dbReference>
<dbReference type="PROSITE" id="PS50963">
    <property type="entry name" value="LINK_2"/>
    <property type="match status" value="2"/>
</dbReference>
<dbReference type="PROSITE" id="PS50923">
    <property type="entry name" value="SUSHI"/>
    <property type="match status" value="1"/>
</dbReference>
<sequence>MLINIKSILWMCSTLIAAHALQKVNMEKSPPVKGSLSGKVNLPCHFSTMPTLPPSYNTTSEFLRIKWSKIELDKTGKDLKETTVLVAQNGNIKIGQDYKGRVSVPTHPEDVGDASLTMVKLLASDAGRYRCDVMYGIEDTQDTVSLTVEGVVFHYRAATSRYTLNFEMAQKACVDIGAVIATPEQLHAAYEDGFEQCDAGWLSDQTVRYPIRVPREGCYGDMMGKEGVRTYGFRAPHETYDVYCYVDHLDGDVFHITAPNKFTFEEAGEECKTQDARLATVGELQAAWRNGFDRCDYGWLLDASVRHPVTVARAQCGGGLLGVRTLYRFENQTGFPTPDSRFDAYCFKPKQNISEATTIELNMLAETVSPTLLEELQVGLDRMTPIVPLITELPVITTKVPPIGNIVNFEQKSTVQPLTSTHRSATESLPPDGSMKKPWDMDYYSPSASGPLGEPDVSEIKEEVPQSTTVVSHHAPDSWDGVKEDLQIKDSVTQIEQIEVGPLVTSMEISKHIPSKEFTVTVTPFVSTTMTLESKTEKKAISTVSESVTTSHYGFTLREGDGEDRISTVRSGQSTSIFSQIPEVITVSKTSEDTTRGQLEDVESVSASTIVSPDSDGSPMDHRQEKQTHGRITEGFLGQYVSTTPFPSQHHTEVELFPYSGDKRLVEGTSTVISPTPRTGRERTETLRPAMRTVTYTNDEIQEKITKDSSIEKIEEEGFSGMKFPTASPEQIHHTKYSVGMTKSFESPALMTTTKPGVTPTEATDVEEDFTTPSGLETDGYQDTTEYEEGITTVHLIQSTLNVEVVTVSKWSLDEDNTTSKPLGSTEHVGSPKLPPALITTTGVSGKDKEMPSLTEDGRDEFTRIPGSTQRPLEEFTEEDTTDHEKFTVRFQPTTSIATTEKSTLRDSITEERVPPFTSTEVRVTHATIEGSALDEGEDVDVSKPLSTVPQFAHPSDVEGSTFVNYSSTQEPTTYVDTSHTIPLPVIPKTEWGVLVPSIPSEGEVLGEPSQDIRVINQTHFEASMYPETVRTTTEITQEATREDFLWKEQTPEKPVSPPSSTTDTAKETTPPLDEQESDGSAYTVFEDRSVMGSDRVSVLVTTPIGKFEQHTSFPPGAVTKAKTDEVVTLTPTTGSKVTFSPWPKQKYETEGTSPRGFVSPFSIGVTQLIEETTTEKREKTSLDYIDLGSGLFEKPKATELPEFSTVKATVPSDTAAFSSADRLHTPSASTEKPPLIDREPDEETTSDMVIIGESTSRVPPTTLEDIVAKKTETDIDREYFTTSSTSTTQPTRPPTVEGKEAFGPQAFSTPEPPAGTKFHPDINVYIIEVRENKTGRMSDFSVSGHPIDSESKEDEPCSEETDPEHDLIAEILPELLGMLHSEEDEEDEECANATDVTTTPSVQYINGKHVVTTVPKDPEAAEARRGQFESVAPSQNFSDSSESDSHQFIITHAGLPTAMQPNESKETTESLEITWRPEIYPETAEPFSSGEPDIFPTASIHEGEATEGPDSITEKNPELDHLVHEHAESVPLFPEESSGDAAIDQESQKIIFSGATEGTFGEEAEKSSTTHTPSMVASSVSAPVSEDASFILTGTPQSDEPLSTVESWVEITPRHTVEFSGSPSIPIPEGSGEAEEDKDKIFAMITDLSQRNTTDPRVTSDTSKIMITESLVDVPTTTIYSISEQVSAVVPTKFVRETDTYEWVFSPPLEETTRKEEEKGTTGTASTVEVHSPTQRLDQFVSPSELESSSETPPDDSAAATRKSFTSQMTPTQSERETTSSTVVFKETEVLDNLAAQTTDPSLSSQPGVLEVSPTVPGSPVSLFMEQGSGEAAVDPETTTVSSLSLNIEPEILAKEEAAGAWSPNVETVFPFEPTEQVLSTAVDREVAETISQTSKENLVSEISGEPTHRAEIKGFSTDFPLEEDFSGDFREYSTVSYPITKEEIVMMEGSGDAAFKDTQMLPSVTPTSDLSNHTADSEEPGSTLVSTSAFPWEEFTASAEGSGEPLLSVSSSVDQVFPSAAGKASGTDSPFIDQRLGEEGAINETDQRSTILPTAEAESTKASTEEGEVKENHTVSMDFPPTVEPDELWPRQEVNPVRQGNGSEIVSEEKTQEQESFEPLQSSVAPEQTTFDSQTFPEPGLQTTGYFTLTTKKTYSTDERMEEEVISLADVSTPTLDSKGLVLYTTLPEVTEKSHFFLATASVTESVPAESVIAGSTIKEEESIKPFPKVTSPIIKESDTDLIFSGLGSGEEVLPTLGSVNFTEIEQVLSTLYPLTSQVQSLEASILNDTSGDYEGMENVANEMRPLISKTDSIFEDGETASSTTLPEILSDARTEGPFTAPLTFSTGPGQPQNQTHRRAEEIQTSRPQPLTDQVSSENSVTAETKETATPATDFLARTYDLEMAKGFVTPTPKPSDLFYEHSGEGSGELDAVGAEVHASGMTQATRQGSTTFVSDRSLEKHPKVPSVEAVTVNGFPTVSMVLPLHPEQREGSPEATGTPASTASYEKATEGAADSFQDHFWGFKDSTLKPDKRKATESIIIDLDKEDKDLILTMTESTILEIIPELTSDKNTVIDIDHTKPIYEDILGMQTDLDPEVPSGPPDSSEESTQVQEKYEAAVNLSSTEENFEASGDILLANYTQATPESKAPEDRNPLDHTDFIFTTGIPILSSETELDVLLPTATSLPIPSKSATVNPESKTEAKTLEDIFESSTLSDGQAIADQSEVISTLGYLERTQNEDEAKKYVSPSFQPEFSSGAEEALTDPTPYVSIGTTYLTAQSLTEAPDVMEGARLPDSIDTSTVSAFSELLSQTPSFPPLSIHLGSGDSEHSEDLQPSALPSTDASTPPVSSGELANIEATFKPSSEEDFYITEPPSLPPDTEPSEDESKPKLLEPTEASATELIAQEEIEIFQNSDNTTSVQVSGEAVKVFPSIETPEAEAIVTAASETKLEGATLRPHSTSASVIHGVEAGVVPQPSPQTSERPTILSPLEISPETQAALIRGEDSTVAAPKQQVPTRMLDSNKQATLSTTELNTELATPSFPLLETSNETSFLIGINEESVEGTAVYLPGPDRCKMNPCLNGGTCYPTETSYVCTCVPGYSGDRCELDFDECHSNPCRNGATCIDGFNTFRCLCLPSYVGALCEQDTETCDYGWHKFQGQCYKYFAHRRTWDAAERECRLQGAHLTSILSHEEQMFVNRVGHDYQWIGLNDKMFEHDFRWTDGSTLQYENWRPNQPDSFFSTGEDCVVIIWHENGQWNDVPCNYHLTYTCKKGTVACGQPPVVENAKTFGKMKPRYEINSLIRYHCKDGFIQRHLPTIRCLGNGRWAMPKITCLNPSAYQRTYSKKYFKNSSSAKDNSINTSKHDHRWSRRWQESRR</sequence>
<keyword id="KW-0025">Alternative splicing</keyword>
<keyword id="KW-0106">Calcium</keyword>
<keyword id="KW-0966">Cell projection</keyword>
<keyword id="KW-0903">Direct protein sequencing</keyword>
<keyword id="KW-1015">Disulfide bond</keyword>
<keyword id="KW-0245">EGF-like domain</keyword>
<keyword id="KW-0272">Extracellular matrix</keyword>
<keyword id="KW-0325">Glycoprotein</keyword>
<keyword id="KW-0373">Hyaluronic acid</keyword>
<keyword id="KW-0393">Immunoglobulin domain</keyword>
<keyword id="KW-0430">Lectin</keyword>
<keyword id="KW-0597">Phosphoprotein</keyword>
<keyword id="KW-0654">Proteoglycan</keyword>
<keyword id="KW-1185">Reference proteome</keyword>
<keyword id="KW-0677">Repeat</keyword>
<keyword id="KW-0964">Secreted</keyword>
<keyword id="KW-0732">Signal</keyword>
<keyword id="KW-0768">Sushi</keyword>
<proteinExistence type="evidence at protein level"/>